<evidence type="ECO:0000255" key="1">
    <source>
        <dbReference type="HAMAP-Rule" id="MF_01318"/>
    </source>
</evidence>
<evidence type="ECO:0000305" key="2"/>
<protein>
    <recommendedName>
        <fullName evidence="1">Large ribosomal subunit protein uL1</fullName>
    </recommendedName>
    <alternativeName>
        <fullName evidence="2">50S ribosomal protein L1</fullName>
    </alternativeName>
</protein>
<organism>
    <name type="scientific">Streptococcus pyogenes serotype M12 (strain MGAS9429)</name>
    <dbReference type="NCBI Taxonomy" id="370551"/>
    <lineage>
        <taxon>Bacteria</taxon>
        <taxon>Bacillati</taxon>
        <taxon>Bacillota</taxon>
        <taxon>Bacilli</taxon>
        <taxon>Lactobacillales</taxon>
        <taxon>Streptococcaceae</taxon>
        <taxon>Streptococcus</taxon>
    </lineage>
</organism>
<sequence length="229" mass="24394">MAKKSKQMRAALEKVDSTKAYSVEEAVALVKETNFAKFDASVEVAYNLNIDVRKADQQIRGAMVLPNGTGKTQRVLVFARGAKAEEAKAAGADFVGEDDLVAKINGGWLDFDVVIATPDMMAIVGRLGRVLGPRNLMPNPKTGTVTMDVAKAVEESKGGKITYRADKAGNVQALIGKVSFDADKLVENFKAFHDVMAKAKPATAKGTYMANVSITSTQGVGIKVDPNSL</sequence>
<gene>
    <name evidence="1" type="primary">rplA</name>
    <name type="ordered locus">MGAS9429_Spy0378</name>
</gene>
<name>RL1_STRPC</name>
<keyword id="KW-0678">Repressor</keyword>
<keyword id="KW-0687">Ribonucleoprotein</keyword>
<keyword id="KW-0689">Ribosomal protein</keyword>
<keyword id="KW-0694">RNA-binding</keyword>
<keyword id="KW-0699">rRNA-binding</keyword>
<keyword id="KW-0810">Translation regulation</keyword>
<keyword id="KW-0820">tRNA-binding</keyword>
<dbReference type="EMBL" id="CP000259">
    <property type="protein sequence ID" value="ABF31566.1"/>
    <property type="molecule type" value="Genomic_DNA"/>
</dbReference>
<dbReference type="RefSeq" id="WP_002985768.1">
    <property type="nucleotide sequence ID" value="NC_008021.1"/>
</dbReference>
<dbReference type="SMR" id="Q1JN33"/>
<dbReference type="KEGG" id="spk:MGAS9429_Spy0378"/>
<dbReference type="HOGENOM" id="CLU_062853_0_0_9"/>
<dbReference type="Proteomes" id="UP000002433">
    <property type="component" value="Chromosome"/>
</dbReference>
<dbReference type="GO" id="GO:0015934">
    <property type="term" value="C:large ribosomal subunit"/>
    <property type="evidence" value="ECO:0007669"/>
    <property type="project" value="InterPro"/>
</dbReference>
<dbReference type="GO" id="GO:0019843">
    <property type="term" value="F:rRNA binding"/>
    <property type="evidence" value="ECO:0007669"/>
    <property type="project" value="UniProtKB-UniRule"/>
</dbReference>
<dbReference type="GO" id="GO:0003735">
    <property type="term" value="F:structural constituent of ribosome"/>
    <property type="evidence" value="ECO:0007669"/>
    <property type="project" value="InterPro"/>
</dbReference>
<dbReference type="GO" id="GO:0000049">
    <property type="term" value="F:tRNA binding"/>
    <property type="evidence" value="ECO:0007669"/>
    <property type="project" value="UniProtKB-KW"/>
</dbReference>
<dbReference type="GO" id="GO:0006417">
    <property type="term" value="P:regulation of translation"/>
    <property type="evidence" value="ECO:0007669"/>
    <property type="project" value="UniProtKB-KW"/>
</dbReference>
<dbReference type="GO" id="GO:0006412">
    <property type="term" value="P:translation"/>
    <property type="evidence" value="ECO:0007669"/>
    <property type="project" value="UniProtKB-UniRule"/>
</dbReference>
<dbReference type="CDD" id="cd00403">
    <property type="entry name" value="Ribosomal_L1"/>
    <property type="match status" value="1"/>
</dbReference>
<dbReference type="FunFam" id="3.40.50.790:FF:000001">
    <property type="entry name" value="50S ribosomal protein L1"/>
    <property type="match status" value="1"/>
</dbReference>
<dbReference type="Gene3D" id="3.30.190.20">
    <property type="match status" value="1"/>
</dbReference>
<dbReference type="Gene3D" id="3.40.50.790">
    <property type="match status" value="1"/>
</dbReference>
<dbReference type="HAMAP" id="MF_01318_B">
    <property type="entry name" value="Ribosomal_uL1_B"/>
    <property type="match status" value="1"/>
</dbReference>
<dbReference type="InterPro" id="IPR005878">
    <property type="entry name" value="Ribosom_uL1_bac-type"/>
</dbReference>
<dbReference type="InterPro" id="IPR002143">
    <property type="entry name" value="Ribosomal_uL1"/>
</dbReference>
<dbReference type="InterPro" id="IPR023674">
    <property type="entry name" value="Ribosomal_uL1-like"/>
</dbReference>
<dbReference type="InterPro" id="IPR028364">
    <property type="entry name" value="Ribosomal_uL1/biogenesis"/>
</dbReference>
<dbReference type="InterPro" id="IPR016095">
    <property type="entry name" value="Ribosomal_uL1_3-a/b-sand"/>
</dbReference>
<dbReference type="InterPro" id="IPR023673">
    <property type="entry name" value="Ribosomal_uL1_CS"/>
</dbReference>
<dbReference type="NCBIfam" id="TIGR01169">
    <property type="entry name" value="rplA_bact"/>
    <property type="match status" value="1"/>
</dbReference>
<dbReference type="PANTHER" id="PTHR36427">
    <property type="entry name" value="54S RIBOSOMAL PROTEIN L1, MITOCHONDRIAL"/>
    <property type="match status" value="1"/>
</dbReference>
<dbReference type="PANTHER" id="PTHR36427:SF3">
    <property type="entry name" value="LARGE RIBOSOMAL SUBUNIT PROTEIN UL1M"/>
    <property type="match status" value="1"/>
</dbReference>
<dbReference type="Pfam" id="PF00687">
    <property type="entry name" value="Ribosomal_L1"/>
    <property type="match status" value="1"/>
</dbReference>
<dbReference type="PIRSF" id="PIRSF002155">
    <property type="entry name" value="Ribosomal_L1"/>
    <property type="match status" value="1"/>
</dbReference>
<dbReference type="SUPFAM" id="SSF56808">
    <property type="entry name" value="Ribosomal protein L1"/>
    <property type="match status" value="1"/>
</dbReference>
<dbReference type="PROSITE" id="PS01199">
    <property type="entry name" value="RIBOSOMAL_L1"/>
    <property type="match status" value="1"/>
</dbReference>
<accession>Q1JN33</accession>
<proteinExistence type="inferred from homology"/>
<feature type="chain" id="PRO_0000308115" description="Large ribosomal subunit protein uL1">
    <location>
        <begin position="1"/>
        <end position="229"/>
    </location>
</feature>
<reference key="1">
    <citation type="journal article" date="2006" name="Proc. Natl. Acad. Sci. U.S.A.">
        <title>Molecular genetic anatomy of inter- and intraserotype variation in the human bacterial pathogen group A Streptococcus.</title>
        <authorList>
            <person name="Beres S.B."/>
            <person name="Richter E.W."/>
            <person name="Nagiec M.J."/>
            <person name="Sumby P."/>
            <person name="Porcella S.F."/>
            <person name="DeLeo F.R."/>
            <person name="Musser J.M."/>
        </authorList>
    </citation>
    <scope>NUCLEOTIDE SEQUENCE [LARGE SCALE GENOMIC DNA]</scope>
    <source>
        <strain>MGAS9429</strain>
    </source>
</reference>
<comment type="function">
    <text evidence="1">Binds directly to 23S rRNA. The L1 stalk is quite mobile in the ribosome, and is involved in E site tRNA release.</text>
</comment>
<comment type="function">
    <text evidence="1">Protein L1 is also a translational repressor protein, it controls the translation of the L11 operon by binding to its mRNA.</text>
</comment>
<comment type="subunit">
    <text evidence="1">Part of the 50S ribosomal subunit.</text>
</comment>
<comment type="similarity">
    <text evidence="1">Belongs to the universal ribosomal protein uL1 family.</text>
</comment>